<gene>
    <name type="primary">CHLASE1</name>
</gene>
<protein>
    <recommendedName>
        <fullName>Chlorophyllase-1, chloroplastic</fullName>
        <ecNumber>3.1.1.14</ecNumber>
    </recommendedName>
    <alternativeName>
        <fullName>Chlorophyll-chlorophyllido hydrolase 1</fullName>
        <shortName>Chlase 1</shortName>
    </alternativeName>
</protein>
<keyword id="KW-0881">Chlorophyll catabolism</keyword>
<keyword id="KW-0150">Chloroplast</keyword>
<keyword id="KW-0903">Direct protein sequencing</keyword>
<keyword id="KW-0378">Hydrolase</keyword>
<keyword id="KW-0934">Plastid</keyword>
<keyword id="KW-0809">Transit peptide</keyword>
<reference key="1">
    <citation type="journal article" date="1999" name="Plant J.">
        <title>Chlorophyll breakdown by chlorophyllase: isolation and functional expression of the chlase1 gene from ethylene-treated citrus fruit and its regulation during development.</title>
        <authorList>
            <person name="Jacob-Wilk D."/>
            <person name="Holland D."/>
            <person name="Goldschmidt E.E."/>
            <person name="Riov J."/>
            <person name="Eyal Y."/>
        </authorList>
    </citation>
    <scope>NUCLEOTIDE SEQUENCE [MRNA]</scope>
    <source>
        <strain>cv. Valencia</strain>
    </source>
</reference>
<reference key="2">
    <citation type="journal article" date="1993" name="Proc. Natl. Acad. Sci. U.S.A.">
        <title>Ethylene induces de novo synthesis of chlorophyllase, a chlorophyll degrading enzyme, in Citrus fruit peel.</title>
        <authorList>
            <person name="Trebitsh T."/>
            <person name="Goldschmidt E.E."/>
            <person name="Riov J."/>
        </authorList>
    </citation>
    <scope>PROTEIN SEQUENCE OF 22-32</scope>
    <scope>CHARACTERIZATION</scope>
    <scope>INDUCTION</scope>
</reference>
<reference key="3">
    <citation type="journal article" date="1996" name="Plant Physiol. Biochem.">
        <title>Distribution of chlorophyllase among components of chloroplast membranes in Citrus sinensis organs.</title>
        <authorList>
            <person name="Brandis A."/>
            <person name="Vainstein A."/>
            <person name="Goldschmidt E.E."/>
        </authorList>
    </citation>
    <scope>SUBCELLULAR LOCATION</scope>
</reference>
<organism>
    <name type="scientific">Citrus sinensis</name>
    <name type="common">Sweet orange</name>
    <name type="synonym">Citrus aurantium var. sinensis</name>
    <dbReference type="NCBI Taxonomy" id="2711"/>
    <lineage>
        <taxon>Eukaryota</taxon>
        <taxon>Viridiplantae</taxon>
        <taxon>Streptophyta</taxon>
        <taxon>Embryophyta</taxon>
        <taxon>Tracheophyta</taxon>
        <taxon>Spermatophyta</taxon>
        <taxon>Magnoliopsida</taxon>
        <taxon>eudicotyledons</taxon>
        <taxon>Gunneridae</taxon>
        <taxon>Pentapetalae</taxon>
        <taxon>rosids</taxon>
        <taxon>malvids</taxon>
        <taxon>Sapindales</taxon>
        <taxon>Rutaceae</taxon>
        <taxon>Aurantioideae</taxon>
        <taxon>Citrus</taxon>
    </lineage>
</organism>
<feature type="transit peptide" description="Chloroplast" evidence="3">
    <location>
        <begin position="1"/>
        <end position="21"/>
    </location>
</feature>
<feature type="chain" id="PRO_0000017839" description="Chlorophyllase-1, chloroplastic">
    <location>
        <begin position="22"/>
        <end position="329"/>
    </location>
</feature>
<feature type="short sequence motif" description="GXSXG" evidence="1">
    <location>
        <begin position="145"/>
        <end position="149"/>
    </location>
</feature>
<feature type="active site" description="Nucleophile" evidence="2">
    <location>
        <position position="147"/>
    </location>
</feature>
<feature type="active site" description="Charge relay system" evidence="2">
    <location>
        <position position="169"/>
    </location>
</feature>
<feature type="active site" description="Charge relay system" evidence="2">
    <location>
        <position position="242"/>
    </location>
</feature>
<proteinExistence type="evidence at protein level"/>
<sequence>MAAMVDAKPAASVQGTPLLATATLPVFTRGIYSTKRITLETSSPSSPPPPKPLIIVTPAGKGTFNVILFLHGTSLSNKSYSKIFDHIASHGFIVVAPQLYTSIPPPSATNELNSAAEVAEWLPQGLQQNLPENTEANVSLVAVMGHSRGGQTAFALSLRYGFGAVIGLDPVAGTSKTTGLDPSILSFDSFDFSIPVTVIGTGLGGVARCITACAPEGANHEEFFNRCKNSSRAHFVATDYGHMDILDDNPSDVKSWALSKYFCKNGNESRDPMRRCVSGIVVAFLKDFFYGDAEDFRQILKDPSFAPIKLDSVEYIDASSMLTTTHVKV</sequence>
<comment type="function">
    <text>Catalyzes the hydrolysis of ester bond in chlorophyll to yield chlorophyllide and phytol.</text>
</comment>
<comment type="catalytic activity">
    <reaction>
        <text>a chlorophyll + H2O = a chlorophyllide + phytol + H(+)</text>
        <dbReference type="Rhea" id="RHEA:19605"/>
        <dbReference type="ChEBI" id="CHEBI:15377"/>
        <dbReference type="ChEBI" id="CHEBI:15378"/>
        <dbReference type="ChEBI" id="CHEBI:17327"/>
        <dbReference type="ChEBI" id="CHEBI:139291"/>
        <dbReference type="ChEBI" id="CHEBI:139292"/>
        <dbReference type="EC" id="3.1.1.14"/>
    </reaction>
</comment>
<comment type="biophysicochemical properties">
    <kinetics>
        <KM>1.76 uM for chlorophyll</KM>
    </kinetics>
    <phDependence>
        <text>Optimum pH is 7.5. Active from pH 5.0 to 9.0.</text>
    </phDependence>
    <temperatureDependence>
        <text>Optimum temperature is 45 degrees Celsius. Active from 30 to 60 degrees Celsius.</text>
    </temperatureDependence>
</comment>
<comment type="pathway">
    <text>Porphyrin-containing compound metabolism; chlorophyll degradation.</text>
</comment>
<comment type="subcellular location">
    <subcellularLocation>
        <location evidence="4">Plastid</location>
        <location evidence="4">Chloroplast</location>
    </subcellularLocation>
</comment>
<comment type="induction">
    <text evidence="3">Low constitutive expression during fruit development and no marked increase towards the later stages of maturation. Strongly induced after 24 hours of exogenous ethylene treatment and increased further up to 7 days. Gibberellin-A3 (GA3) and the cytokinin N6-benzyladenine (BA) inhibit this induction by ethylene.</text>
</comment>
<comment type="similarity">
    <text evidence="5">Belongs to the AB hydrolase superfamily. Lipase family.</text>
</comment>
<dbReference type="EC" id="3.1.1.14"/>
<dbReference type="EMBL" id="AF160869">
    <property type="protein sequence ID" value="AAF59834.1"/>
    <property type="molecule type" value="mRNA"/>
</dbReference>
<dbReference type="RefSeq" id="NP_001275819.1">
    <property type="nucleotide sequence ID" value="NM_001288890.1"/>
</dbReference>
<dbReference type="SMR" id="Q9MV14"/>
<dbReference type="ESTHER" id="citsi-Q9MV14">
    <property type="family name" value="Chlorophyllase_Plant"/>
</dbReference>
<dbReference type="PaxDb" id="2711-XP_006479664.1"/>
<dbReference type="GeneID" id="102578008"/>
<dbReference type="KEGG" id="cit:102578008"/>
<dbReference type="eggNOG" id="ENOG502QT6A">
    <property type="taxonomic scope" value="Eukaryota"/>
</dbReference>
<dbReference type="OrthoDB" id="855424at71240"/>
<dbReference type="BRENDA" id="3.1.1.14">
    <property type="organism ID" value="1426"/>
</dbReference>
<dbReference type="SABIO-RK" id="Q9MV14"/>
<dbReference type="UniPathway" id="UPA00674"/>
<dbReference type="GO" id="GO:0009507">
    <property type="term" value="C:chloroplast"/>
    <property type="evidence" value="ECO:0007669"/>
    <property type="project" value="UniProtKB-SubCell"/>
</dbReference>
<dbReference type="GO" id="GO:0047746">
    <property type="term" value="F:chlorophyllase activity"/>
    <property type="evidence" value="ECO:0000314"/>
    <property type="project" value="UniProtKB"/>
</dbReference>
<dbReference type="GO" id="GO:0015996">
    <property type="term" value="P:chlorophyll catabolic process"/>
    <property type="evidence" value="ECO:0000314"/>
    <property type="project" value="UniProtKB"/>
</dbReference>
<dbReference type="Gene3D" id="3.40.50.1820">
    <property type="entry name" value="alpha/beta hydrolase"/>
    <property type="match status" value="1"/>
</dbReference>
<dbReference type="InterPro" id="IPR029058">
    <property type="entry name" value="AB_hydrolase_fold"/>
</dbReference>
<dbReference type="InterPro" id="IPR048264">
    <property type="entry name" value="Chlorophyllase"/>
</dbReference>
<dbReference type="InterPro" id="IPR017395">
    <property type="entry name" value="Chlorophyllase-like"/>
</dbReference>
<dbReference type="PANTHER" id="PTHR33428:SF10">
    <property type="entry name" value="CHLOROPHYLLASE-1"/>
    <property type="match status" value="1"/>
</dbReference>
<dbReference type="PANTHER" id="PTHR33428">
    <property type="entry name" value="CHLOROPHYLLASE-2, CHLOROPLASTIC"/>
    <property type="match status" value="1"/>
</dbReference>
<dbReference type="Pfam" id="PF07224">
    <property type="entry name" value="Chlorophyllase"/>
    <property type="match status" value="1"/>
</dbReference>
<dbReference type="PIRSF" id="PIRSF038128">
    <property type="entry name" value="Chlorophyllase_chloroplast"/>
    <property type="match status" value="1"/>
</dbReference>
<dbReference type="SUPFAM" id="SSF53474">
    <property type="entry name" value="alpha/beta-Hydrolases"/>
    <property type="match status" value="1"/>
</dbReference>
<dbReference type="PROSITE" id="PS00120">
    <property type="entry name" value="LIPASE_SER"/>
    <property type="match status" value="1"/>
</dbReference>
<name>CLH1_CITSI</name>
<accession>Q9MV14</accession>
<evidence type="ECO:0000250" key="1">
    <source>
        <dbReference type="UniProtKB" id="Q948R1"/>
    </source>
</evidence>
<evidence type="ECO:0000250" key="2">
    <source>
        <dbReference type="UniProtKB" id="Q9LE89"/>
    </source>
</evidence>
<evidence type="ECO:0000269" key="3">
    <source>
    </source>
</evidence>
<evidence type="ECO:0000269" key="4">
    <source ref="3"/>
</evidence>
<evidence type="ECO:0000305" key="5"/>